<name>METAS_CARH6</name>
<protein>
    <recommendedName>
        <fullName evidence="1">Homoserine O-succinyltransferase</fullName>
        <shortName evidence="1 3">HST</shortName>
        <ecNumber evidence="1 2">2.3.1.46</ecNumber>
    </recommendedName>
    <alternativeName>
        <fullName evidence="1">Homoserine transsuccinylase</fullName>
        <shortName evidence="1">HTS</shortName>
    </alternativeName>
</protein>
<gene>
    <name evidence="1 3" type="primary">metAS</name>
    <name evidence="4" type="ORF">HMPREF0198_1409</name>
</gene>
<reference key="1">
    <citation type="submission" date="2009-08" db="EMBL/GenBank/DDBJ databases">
        <authorList>
            <person name="Qin X."/>
            <person name="Bachman B."/>
            <person name="Battles P."/>
            <person name="Bell A."/>
            <person name="Bess C."/>
            <person name="Bickham C."/>
            <person name="Chaboub L."/>
            <person name="Chen D."/>
            <person name="Coyle M."/>
            <person name="Deiros D.R."/>
            <person name="Dinh H."/>
            <person name="Forbes L."/>
            <person name="Fowler G."/>
            <person name="Francisco L."/>
            <person name="Fu Q."/>
            <person name="Gubbala S."/>
            <person name="Hale W."/>
            <person name="Han Y."/>
            <person name="Hemphill L."/>
            <person name="Highlander S.K."/>
            <person name="Hirani K."/>
            <person name="Hogues M."/>
            <person name="Jackson L."/>
            <person name="Jakkamsetti A."/>
            <person name="Javaid M."/>
            <person name="Jiang H."/>
            <person name="Korchina V."/>
            <person name="Kovar C."/>
            <person name="Lara F."/>
            <person name="Lee S."/>
            <person name="Mata R."/>
            <person name="Mathew T."/>
            <person name="Moen C."/>
            <person name="Morales K."/>
            <person name="Munidasa M."/>
            <person name="Nazareth L."/>
            <person name="Ngo R."/>
            <person name="Nguyen L."/>
            <person name="Okwuonu G."/>
            <person name="Ongeri F."/>
            <person name="Patil S."/>
            <person name="Petrosino J."/>
            <person name="Pham C."/>
            <person name="Pham P."/>
            <person name="Pu L.-L."/>
            <person name="Puazo M."/>
            <person name="Raj R."/>
            <person name="Reid J."/>
            <person name="Rouhana J."/>
            <person name="Saada N."/>
            <person name="Shang Y."/>
            <person name="Simmons D."/>
            <person name="Thornton R."/>
            <person name="Warren J."/>
            <person name="Weissenberger G."/>
            <person name="Zhang J."/>
            <person name="Zhang L."/>
            <person name="Zhou C."/>
            <person name="Zhu D."/>
            <person name="Muzny D."/>
            <person name="Worley K."/>
            <person name="Gibbs R."/>
        </authorList>
    </citation>
    <scope>NUCLEOTIDE SEQUENCE [LARGE SCALE GENOMIC DNA]</scope>
    <source>
        <strain>ATCC 15826 / DSM 8339 / NCTC 10426 / 6573</strain>
    </source>
</reference>
<reference key="2">
    <citation type="journal article" date="2017" name="Nat. Chem. Biol.">
        <title>Parallel evolution of non-homologous isofunctional enzymes in methionine biosynthesis.</title>
        <authorList>
            <person name="Bastard K."/>
            <person name="Perret A."/>
            <person name="Mariage A."/>
            <person name="Bessonnet T."/>
            <person name="Pinet-Turpault A."/>
            <person name="Petit J.L."/>
            <person name="Darii E."/>
            <person name="Bazire P."/>
            <person name="Vergne-Vaxelaire C."/>
            <person name="Brewee C."/>
            <person name="Debard A."/>
            <person name="Pellouin V."/>
            <person name="Besnard-Gonnet M."/>
            <person name="Artiguenave F."/>
            <person name="Medigue C."/>
            <person name="Vallenet D."/>
            <person name="Danchin A."/>
            <person name="Zaparucha A."/>
            <person name="Weissenbach J."/>
            <person name="Salanoubat M."/>
            <person name="de Berardinis V."/>
        </authorList>
    </citation>
    <scope>FUNCTION</scope>
    <scope>CATALYTIC ACTIVITY</scope>
</reference>
<keyword id="KW-0012">Acyltransferase</keyword>
<keyword id="KW-0028">Amino-acid biosynthesis</keyword>
<keyword id="KW-0963">Cytoplasm</keyword>
<keyword id="KW-0486">Methionine biosynthesis</keyword>
<keyword id="KW-1185">Reference proteome</keyword>
<keyword id="KW-0808">Transferase</keyword>
<accession>C8NA81</accession>
<sequence length="350" mass="39974">MPLVAHRELESLDRLRAEGQEILDVRRASQQDIRELHIGLLNLMPDGALKATERQFLRLIGNSNRIAQFYVHIFTVPGVPRSADMQAYIDSHYENFDDLAHDGLDAIIFTGTNPLHADLAQEAYWPHVQRVFDWADKNVTSVLCSCLASHLALQHFHGIARKRRDEKLFGVFSHRVLDRSHPMLANINTRFDMPHSRWNGISAAQLEARGLPVLVAGEESGVAMASSPDGFRQIYFQGHPEYDRSSLLKEFRRDLALYQDGKLPQPPKLPTHYFTPAGQRLIRDYIESGRPISDFPEAQLADEVDVTWRDTAKALFANWLGLVYQLTHKERHLQYMDGIDPADPLGRLRR</sequence>
<feature type="chain" id="PRO_0000440350" description="Homoserine O-succinyltransferase">
    <location>
        <begin position="1"/>
        <end position="350"/>
    </location>
</feature>
<feature type="active site" description="Acyl-thioester intermediate" evidence="1">
    <location>
        <position position="146"/>
    </location>
</feature>
<feature type="active site" description="Proton acceptor" evidence="1">
    <location>
        <position position="239"/>
    </location>
</feature>
<feature type="active site" evidence="1">
    <location>
        <position position="241"/>
    </location>
</feature>
<feature type="binding site" evidence="1">
    <location>
        <position position="167"/>
    </location>
    <ligand>
        <name>substrate</name>
    </ligand>
</feature>
<feature type="binding site" evidence="1">
    <location>
        <position position="196"/>
    </location>
    <ligand>
        <name>substrate</name>
    </ligand>
</feature>
<feature type="binding site" evidence="1">
    <location>
        <position position="253"/>
    </location>
    <ligand>
        <name>substrate</name>
    </ligand>
</feature>
<feature type="site" description="Important for acyl-CoA specificity" evidence="1">
    <location>
        <position position="113"/>
    </location>
</feature>
<feature type="site" description="Important for acyl-CoA specificity" evidence="1">
    <location>
        <position position="147"/>
    </location>
</feature>
<feature type="site" description="Important for substrate specificity" evidence="1">
    <location>
        <position position="196"/>
    </location>
</feature>
<dbReference type="EC" id="2.3.1.46" evidence="1 2"/>
<dbReference type="EMBL" id="ACKY01000070">
    <property type="protein sequence ID" value="EEV88470.1"/>
    <property type="molecule type" value="Genomic_DNA"/>
</dbReference>
<dbReference type="RefSeq" id="WP_004142740.1">
    <property type="nucleotide sequence ID" value="NZ_GG694028.1"/>
</dbReference>
<dbReference type="SMR" id="C8NA81"/>
<dbReference type="STRING" id="2718.CHUV0807_1893"/>
<dbReference type="GeneID" id="84788468"/>
<dbReference type="HOGENOM" id="CLU_057851_0_1_6"/>
<dbReference type="OrthoDB" id="9772423at2"/>
<dbReference type="UniPathway" id="UPA00051">
    <property type="reaction ID" value="UER00075"/>
</dbReference>
<dbReference type="Proteomes" id="UP000004870">
    <property type="component" value="Unassembled WGS sequence"/>
</dbReference>
<dbReference type="GO" id="GO:0005737">
    <property type="term" value="C:cytoplasm"/>
    <property type="evidence" value="ECO:0007669"/>
    <property type="project" value="UniProtKB-SubCell"/>
</dbReference>
<dbReference type="GO" id="GO:0004414">
    <property type="term" value="F:homoserine O-acetyltransferase activity"/>
    <property type="evidence" value="ECO:0007669"/>
    <property type="project" value="UniProtKB-UniRule"/>
</dbReference>
<dbReference type="GO" id="GO:0008899">
    <property type="term" value="F:homoserine O-succinyltransferase activity"/>
    <property type="evidence" value="ECO:0007669"/>
    <property type="project" value="UniProtKB-EC"/>
</dbReference>
<dbReference type="GO" id="GO:0009086">
    <property type="term" value="P:methionine biosynthetic process"/>
    <property type="evidence" value="ECO:0007669"/>
    <property type="project" value="UniProtKB-UniRule"/>
</dbReference>
<dbReference type="Gene3D" id="3.40.50.880">
    <property type="match status" value="1"/>
</dbReference>
<dbReference type="HAMAP" id="MF_00295">
    <property type="entry name" value="MetA_acyltransf"/>
    <property type="match status" value="1"/>
</dbReference>
<dbReference type="InterPro" id="IPR029062">
    <property type="entry name" value="Class_I_gatase-like"/>
</dbReference>
<dbReference type="InterPro" id="IPR033752">
    <property type="entry name" value="MetA_family"/>
</dbReference>
<dbReference type="NCBIfam" id="NF003776">
    <property type="entry name" value="PRK05368.1-3"/>
    <property type="match status" value="1"/>
</dbReference>
<dbReference type="PANTHER" id="PTHR20919">
    <property type="entry name" value="HOMOSERINE O-SUCCINYLTRANSFERASE"/>
    <property type="match status" value="1"/>
</dbReference>
<dbReference type="PANTHER" id="PTHR20919:SF0">
    <property type="entry name" value="HOMOSERINE O-SUCCINYLTRANSFERASE"/>
    <property type="match status" value="1"/>
</dbReference>
<dbReference type="Pfam" id="PF04204">
    <property type="entry name" value="HTS"/>
    <property type="match status" value="1"/>
</dbReference>
<dbReference type="PIRSF" id="PIRSF000450">
    <property type="entry name" value="H_ser_succinyltr"/>
    <property type="match status" value="1"/>
</dbReference>
<dbReference type="SUPFAM" id="SSF52317">
    <property type="entry name" value="Class I glutamine amidotransferase-like"/>
    <property type="match status" value="1"/>
</dbReference>
<organism>
    <name type="scientific">Cardiobacterium hominis (strain ATCC 15826 / DSM 8339 / NCTC 10426 / 6573)</name>
    <dbReference type="NCBI Taxonomy" id="638300"/>
    <lineage>
        <taxon>Bacteria</taxon>
        <taxon>Pseudomonadati</taxon>
        <taxon>Pseudomonadota</taxon>
        <taxon>Gammaproteobacteria</taxon>
        <taxon>Cardiobacteriales</taxon>
        <taxon>Cardiobacteriaceae</taxon>
        <taxon>Cardiobacterium</taxon>
    </lineage>
</organism>
<comment type="function">
    <text evidence="1 2">Transfers a succinyl group from succinyl-CoA to L-homoserine, forming succinyl-L-homoserine.</text>
</comment>
<comment type="catalytic activity">
    <reaction evidence="1 2">
        <text>L-homoserine + succinyl-CoA = O-succinyl-L-homoserine + CoA</text>
        <dbReference type="Rhea" id="RHEA:22008"/>
        <dbReference type="ChEBI" id="CHEBI:57287"/>
        <dbReference type="ChEBI" id="CHEBI:57292"/>
        <dbReference type="ChEBI" id="CHEBI:57476"/>
        <dbReference type="ChEBI" id="CHEBI:57661"/>
        <dbReference type="EC" id="2.3.1.46"/>
    </reaction>
</comment>
<comment type="pathway">
    <text evidence="1">Amino-acid biosynthesis; L-methionine biosynthesis via de novo pathway; O-succinyl-L-homoserine from L-homoserine: step 1/1.</text>
</comment>
<comment type="subcellular location">
    <subcellularLocation>
        <location evidence="1">Cytoplasm</location>
    </subcellularLocation>
</comment>
<comment type="similarity">
    <text evidence="1">Belongs to the MetA family.</text>
</comment>
<evidence type="ECO:0000255" key="1">
    <source>
        <dbReference type="HAMAP-Rule" id="MF_00295"/>
    </source>
</evidence>
<evidence type="ECO:0000269" key="2">
    <source>
    </source>
</evidence>
<evidence type="ECO:0000303" key="3">
    <source>
    </source>
</evidence>
<evidence type="ECO:0000312" key="4">
    <source>
        <dbReference type="EMBL" id="EEV88470.1"/>
    </source>
</evidence>
<proteinExistence type="evidence at protein level"/>